<protein>
    <recommendedName>
        <fullName>DNA recombination protein RmuC homolog</fullName>
    </recommendedName>
</protein>
<organism>
    <name type="scientific">Pasteurella multocida (strain Pm70)</name>
    <dbReference type="NCBI Taxonomy" id="272843"/>
    <lineage>
        <taxon>Bacteria</taxon>
        <taxon>Pseudomonadati</taxon>
        <taxon>Pseudomonadota</taxon>
        <taxon>Gammaproteobacteria</taxon>
        <taxon>Pasteurellales</taxon>
        <taxon>Pasteurellaceae</taxon>
        <taxon>Pasteurella</taxon>
    </lineage>
</organism>
<feature type="chain" id="PRO_0000202047" description="DNA recombination protein RmuC homolog">
    <location>
        <begin position="1"/>
        <end position="509"/>
    </location>
</feature>
<feature type="coiled-coil region" evidence="2">
    <location>
        <begin position="1"/>
        <end position="167"/>
    </location>
</feature>
<comment type="function">
    <text evidence="1">Involved in DNA recombination.</text>
</comment>
<comment type="similarity">
    <text evidence="3">Belongs to the RmuC family.</text>
</comment>
<comment type="sequence caution" evidence="3">
    <conflict type="erroneous initiation">
        <sequence resource="EMBL-CDS" id="AAK03351"/>
    </conflict>
</comment>
<evidence type="ECO:0000250" key="1"/>
<evidence type="ECO:0000255" key="2"/>
<evidence type="ECO:0000305" key="3"/>
<proteinExistence type="inferred from homology"/>
<name>RMUC_PASMU</name>
<keyword id="KW-0175">Coiled coil</keyword>
<keyword id="KW-0233">DNA recombination</keyword>
<keyword id="KW-1185">Reference proteome</keyword>
<sequence>MQQDLNKTIEDFNQLLSKFEAVQQAKNQLEQHVVKYQTTAEGLQVRLIERDDKLAYLQKELDEEQARHNDIAEKITALKERFGIASAQAESLAKQLEHSQANFTRKEQENQELMAKLTTLSQELTELKTTLSEKEKHFAEQQQHIEQSKQQLSTEFQNLANRILDEKSRSFSQSNQTALDSLLKPFREQIEGFQKRVNEIHSESVKGNAGLEAEIKKVLEIGLNMSQQADNLTSALKGEKKTLGNWGEVQLERALQLAGLLEGEHYSAQAHLKDGEGKHNYPDFVLNLPDNKHLIIDSKMSLVAYESAVNAEDDLKRQNKLREHIKAIKNHIDDLSRKDYSNLIGMRSPNFVLMFIAVEPAYIEAMKMDPTLFNYGYEKNVILVSHTTLMPILRTVANLWRIERGNAEAKEISARAGDIYNQICVIAERLGKLGNTLSSASSHYNSTVTALVGQQGLVGKVERFKDLSAKANKTMPNVELLHHAVESERLDVIKADTPEAQPQKDNTAQ</sequence>
<dbReference type="EMBL" id="AE004439">
    <property type="protein sequence ID" value="AAK03351.1"/>
    <property type="status" value="ALT_INIT"/>
    <property type="molecule type" value="Genomic_DNA"/>
</dbReference>
<dbReference type="SMR" id="Q9CLG7"/>
<dbReference type="STRING" id="272843.PM1267"/>
<dbReference type="EnsemblBacteria" id="AAK03351">
    <property type="protein sequence ID" value="AAK03351"/>
    <property type="gene ID" value="PM1267"/>
</dbReference>
<dbReference type="KEGG" id="pmu:PM1267"/>
<dbReference type="HOGENOM" id="CLU_024057_0_0_6"/>
<dbReference type="Proteomes" id="UP000000809">
    <property type="component" value="Chromosome"/>
</dbReference>
<dbReference type="GO" id="GO:0006310">
    <property type="term" value="P:DNA recombination"/>
    <property type="evidence" value="ECO:0007669"/>
    <property type="project" value="UniProtKB-KW"/>
</dbReference>
<dbReference type="Gene3D" id="1.10.287.1490">
    <property type="match status" value="1"/>
</dbReference>
<dbReference type="InterPro" id="IPR003798">
    <property type="entry name" value="DNA_recombination_RmuC"/>
</dbReference>
<dbReference type="PANTHER" id="PTHR30563">
    <property type="entry name" value="DNA RECOMBINATION PROTEIN RMUC"/>
    <property type="match status" value="1"/>
</dbReference>
<dbReference type="PANTHER" id="PTHR30563:SF0">
    <property type="entry name" value="DNA RECOMBINATION PROTEIN RMUC"/>
    <property type="match status" value="1"/>
</dbReference>
<dbReference type="Pfam" id="PF02646">
    <property type="entry name" value="RmuC"/>
    <property type="match status" value="1"/>
</dbReference>
<dbReference type="SUPFAM" id="SSF90257">
    <property type="entry name" value="Myosin rod fragments"/>
    <property type="match status" value="1"/>
</dbReference>
<accession>Q9CLG7</accession>
<gene>
    <name type="primary">rmuC</name>
    <name type="ordered locus">PM1267</name>
</gene>
<reference key="1">
    <citation type="journal article" date="2001" name="Proc. Natl. Acad. Sci. U.S.A.">
        <title>Complete genomic sequence of Pasteurella multocida Pm70.</title>
        <authorList>
            <person name="May B.J."/>
            <person name="Zhang Q."/>
            <person name="Li L.L."/>
            <person name="Paustian M.L."/>
            <person name="Whittam T.S."/>
            <person name="Kapur V."/>
        </authorList>
    </citation>
    <scope>NUCLEOTIDE SEQUENCE [LARGE SCALE GENOMIC DNA]</scope>
    <source>
        <strain>Pm70</strain>
    </source>
</reference>